<accession>P45865</accession>
<gene>
    <name type="primary">clsB</name>
    <name type="synonym">ywjE</name>
    <name type="ordered locus">BSU37190</name>
</gene>
<dbReference type="EMBL" id="Z49782">
    <property type="protein sequence ID" value="CAA89866.1"/>
    <property type="molecule type" value="Genomic_DNA"/>
</dbReference>
<dbReference type="EMBL" id="AL009126">
    <property type="protein sequence ID" value="CAB15747.1"/>
    <property type="molecule type" value="Genomic_DNA"/>
</dbReference>
<dbReference type="PIR" id="S55419">
    <property type="entry name" value="S55419"/>
</dbReference>
<dbReference type="RefSeq" id="NP_391600.1">
    <property type="nucleotide sequence ID" value="NC_000964.3"/>
</dbReference>
<dbReference type="SMR" id="P45865"/>
<dbReference type="FunCoup" id="P45865">
    <property type="interactions" value="73"/>
</dbReference>
<dbReference type="STRING" id="224308.BSU37190"/>
<dbReference type="PaxDb" id="224308-BSU37190"/>
<dbReference type="DNASU" id="938460"/>
<dbReference type="EnsemblBacteria" id="CAB15747">
    <property type="protein sequence ID" value="CAB15747"/>
    <property type="gene ID" value="BSU_37190"/>
</dbReference>
<dbReference type="GeneID" id="938460"/>
<dbReference type="KEGG" id="bsu:BSU37190"/>
<dbReference type="PATRIC" id="fig|224308.179.peg.4029"/>
<dbReference type="eggNOG" id="COG1502">
    <property type="taxonomic scope" value="Bacteria"/>
</dbReference>
<dbReference type="InParanoid" id="P45865"/>
<dbReference type="OrthoDB" id="9762009at2"/>
<dbReference type="PhylomeDB" id="P45865"/>
<dbReference type="BioCyc" id="BSUB:BSU37190-MONOMER"/>
<dbReference type="Proteomes" id="UP000001570">
    <property type="component" value="Chromosome"/>
</dbReference>
<dbReference type="GO" id="GO:0005886">
    <property type="term" value="C:plasma membrane"/>
    <property type="evidence" value="ECO:0007669"/>
    <property type="project" value="UniProtKB-SubCell"/>
</dbReference>
<dbReference type="GO" id="GO:0008808">
    <property type="term" value="F:cardiolipin synthase activity"/>
    <property type="evidence" value="ECO:0000315"/>
    <property type="project" value="UniProtKB"/>
</dbReference>
<dbReference type="GO" id="GO:0032049">
    <property type="term" value="P:cardiolipin biosynthetic process"/>
    <property type="evidence" value="ECO:0000315"/>
    <property type="project" value="UniProtKB"/>
</dbReference>
<dbReference type="GO" id="GO:0043934">
    <property type="term" value="P:sporulation"/>
    <property type="evidence" value="ECO:0000315"/>
    <property type="project" value="UniProtKB"/>
</dbReference>
<dbReference type="CDD" id="cd09110">
    <property type="entry name" value="PLDc_CLS_1"/>
    <property type="match status" value="1"/>
</dbReference>
<dbReference type="CDD" id="cd09112">
    <property type="entry name" value="PLDc_CLS_2"/>
    <property type="match status" value="1"/>
</dbReference>
<dbReference type="FunFam" id="3.30.870.10:FF:000042">
    <property type="entry name" value="Cardiolipin synthetase domain protein"/>
    <property type="match status" value="1"/>
</dbReference>
<dbReference type="Gene3D" id="3.30.870.10">
    <property type="entry name" value="Endonuclease Chain A"/>
    <property type="match status" value="2"/>
</dbReference>
<dbReference type="InterPro" id="IPR022924">
    <property type="entry name" value="Cardiolipin_synthase"/>
</dbReference>
<dbReference type="InterPro" id="IPR025202">
    <property type="entry name" value="PLD-like_dom"/>
</dbReference>
<dbReference type="InterPro" id="IPR001736">
    <property type="entry name" value="PLipase_D/transphosphatidylase"/>
</dbReference>
<dbReference type="NCBIfam" id="TIGR04265">
    <property type="entry name" value="bac_cardiolipin"/>
    <property type="match status" value="1"/>
</dbReference>
<dbReference type="PANTHER" id="PTHR21248">
    <property type="entry name" value="CARDIOLIPIN SYNTHASE"/>
    <property type="match status" value="1"/>
</dbReference>
<dbReference type="PANTHER" id="PTHR21248:SF7">
    <property type="entry name" value="MINOR CARDIOLIPIN SYNTHASE CLSB"/>
    <property type="match status" value="1"/>
</dbReference>
<dbReference type="Pfam" id="PF13091">
    <property type="entry name" value="PLDc_2"/>
    <property type="match status" value="2"/>
</dbReference>
<dbReference type="PIRSF" id="PIRSF000850">
    <property type="entry name" value="Phospholipase_D_PSS"/>
    <property type="match status" value="1"/>
</dbReference>
<dbReference type="SMART" id="SM00155">
    <property type="entry name" value="PLDc"/>
    <property type="match status" value="2"/>
</dbReference>
<dbReference type="SUPFAM" id="SSF56024">
    <property type="entry name" value="Phospholipase D/nuclease"/>
    <property type="match status" value="2"/>
</dbReference>
<dbReference type="PROSITE" id="PS50035">
    <property type="entry name" value="PLD"/>
    <property type="match status" value="2"/>
</dbReference>
<protein>
    <recommendedName>
        <fullName>Minor cardiolipin synthase ClsB</fullName>
    </recommendedName>
</protein>
<keyword id="KW-1003">Cell membrane</keyword>
<keyword id="KW-0472">Membrane</keyword>
<keyword id="KW-1185">Reference proteome</keyword>
<keyword id="KW-0677">Repeat</keyword>
<keyword id="KW-0808">Transferase</keyword>
<keyword id="KW-0812">Transmembrane</keyword>
<keyword id="KW-1133">Transmembrane helix</keyword>
<evidence type="ECO:0000255" key="1"/>
<evidence type="ECO:0000255" key="2">
    <source>
        <dbReference type="PROSITE-ProRule" id="PRU00153"/>
    </source>
</evidence>
<evidence type="ECO:0000269" key="3">
    <source>
    </source>
</evidence>
<evidence type="ECO:0000305" key="4"/>
<organism>
    <name type="scientific">Bacillus subtilis (strain 168)</name>
    <dbReference type="NCBI Taxonomy" id="224308"/>
    <lineage>
        <taxon>Bacteria</taxon>
        <taxon>Bacillati</taxon>
        <taxon>Bacillota</taxon>
        <taxon>Bacilli</taxon>
        <taxon>Bacillales</taxon>
        <taxon>Bacillaceae</taxon>
        <taxon>Bacillus</taxon>
    </lineage>
</organism>
<feature type="chain" id="PRO_0000201281" description="Minor cardiolipin synthase ClsB">
    <location>
        <begin position="1"/>
        <end position="398"/>
    </location>
</feature>
<feature type="transmembrane region" description="Helical" evidence="1">
    <location>
        <begin position="3"/>
        <end position="23"/>
    </location>
</feature>
<feature type="domain" description="PLD phosphodiesterase 1" evidence="2">
    <location>
        <begin position="141"/>
        <end position="168"/>
    </location>
</feature>
<feature type="domain" description="PLD phosphodiesterase 2" evidence="2">
    <location>
        <begin position="311"/>
        <end position="338"/>
    </location>
</feature>
<name>CLSB_BACSU</name>
<comment type="function">
    <text evidence="3">Involved in the biosynthesis of cardiolipin.</text>
</comment>
<comment type="subcellular location">
    <subcellularLocation>
        <location evidence="4">Cell membrane</location>
        <topology evidence="4">Single-pass membrane protein</topology>
    </subcellularLocation>
</comment>
<comment type="disruption phenotype">
    <text evidence="3">Cells lacking this gene show a lack of cardiolipin.</text>
</comment>
<comment type="similarity">
    <text evidence="4">Belongs to the phospholipase D family. Cardiolipin synthase subfamily.</text>
</comment>
<reference key="1">
    <citation type="journal article" date="1997" name="Microbiology">
        <title>The Bacillus subtilis genome from gerBC (311 degrees) to licR (334 degrees).</title>
        <authorList>
            <person name="Presecan E."/>
            <person name="Moszer I."/>
            <person name="Boursier L."/>
            <person name="Cruz Ramos H."/>
            <person name="De La Fuente V."/>
            <person name="Hullo M.-F."/>
            <person name="Lelong C."/>
            <person name="Schleich S."/>
            <person name="Sekowska A."/>
            <person name="Song B.H."/>
            <person name="Villani G."/>
            <person name="Kunst F."/>
            <person name="Danchin A."/>
            <person name="Glaser P."/>
        </authorList>
    </citation>
    <scope>NUCLEOTIDE SEQUENCE [GENOMIC DNA]</scope>
    <source>
        <strain>168</strain>
    </source>
</reference>
<reference key="2">
    <citation type="journal article" date="1997" name="Nature">
        <title>The complete genome sequence of the Gram-positive bacterium Bacillus subtilis.</title>
        <authorList>
            <person name="Kunst F."/>
            <person name="Ogasawara N."/>
            <person name="Moszer I."/>
            <person name="Albertini A.M."/>
            <person name="Alloni G."/>
            <person name="Azevedo V."/>
            <person name="Bertero M.G."/>
            <person name="Bessieres P."/>
            <person name="Bolotin A."/>
            <person name="Borchert S."/>
            <person name="Borriss R."/>
            <person name="Boursier L."/>
            <person name="Brans A."/>
            <person name="Braun M."/>
            <person name="Brignell S.C."/>
            <person name="Bron S."/>
            <person name="Brouillet S."/>
            <person name="Bruschi C.V."/>
            <person name="Caldwell B."/>
            <person name="Capuano V."/>
            <person name="Carter N.M."/>
            <person name="Choi S.-K."/>
            <person name="Codani J.-J."/>
            <person name="Connerton I.F."/>
            <person name="Cummings N.J."/>
            <person name="Daniel R.A."/>
            <person name="Denizot F."/>
            <person name="Devine K.M."/>
            <person name="Duesterhoeft A."/>
            <person name="Ehrlich S.D."/>
            <person name="Emmerson P.T."/>
            <person name="Entian K.-D."/>
            <person name="Errington J."/>
            <person name="Fabret C."/>
            <person name="Ferrari E."/>
            <person name="Foulger D."/>
            <person name="Fritz C."/>
            <person name="Fujita M."/>
            <person name="Fujita Y."/>
            <person name="Fuma S."/>
            <person name="Galizzi A."/>
            <person name="Galleron N."/>
            <person name="Ghim S.-Y."/>
            <person name="Glaser P."/>
            <person name="Goffeau A."/>
            <person name="Golightly E.J."/>
            <person name="Grandi G."/>
            <person name="Guiseppi G."/>
            <person name="Guy B.J."/>
            <person name="Haga K."/>
            <person name="Haiech J."/>
            <person name="Harwood C.R."/>
            <person name="Henaut A."/>
            <person name="Hilbert H."/>
            <person name="Holsappel S."/>
            <person name="Hosono S."/>
            <person name="Hullo M.-F."/>
            <person name="Itaya M."/>
            <person name="Jones L.-M."/>
            <person name="Joris B."/>
            <person name="Karamata D."/>
            <person name="Kasahara Y."/>
            <person name="Klaerr-Blanchard M."/>
            <person name="Klein C."/>
            <person name="Kobayashi Y."/>
            <person name="Koetter P."/>
            <person name="Koningstein G."/>
            <person name="Krogh S."/>
            <person name="Kumano M."/>
            <person name="Kurita K."/>
            <person name="Lapidus A."/>
            <person name="Lardinois S."/>
            <person name="Lauber J."/>
            <person name="Lazarevic V."/>
            <person name="Lee S.-M."/>
            <person name="Levine A."/>
            <person name="Liu H."/>
            <person name="Masuda S."/>
            <person name="Mauel C."/>
            <person name="Medigue C."/>
            <person name="Medina N."/>
            <person name="Mellado R.P."/>
            <person name="Mizuno M."/>
            <person name="Moestl D."/>
            <person name="Nakai S."/>
            <person name="Noback M."/>
            <person name="Noone D."/>
            <person name="O'Reilly M."/>
            <person name="Ogawa K."/>
            <person name="Ogiwara A."/>
            <person name="Oudega B."/>
            <person name="Park S.-H."/>
            <person name="Parro V."/>
            <person name="Pohl T.M."/>
            <person name="Portetelle D."/>
            <person name="Porwollik S."/>
            <person name="Prescott A.M."/>
            <person name="Presecan E."/>
            <person name="Pujic P."/>
            <person name="Purnelle B."/>
            <person name="Rapoport G."/>
            <person name="Rey M."/>
            <person name="Reynolds S."/>
            <person name="Rieger M."/>
            <person name="Rivolta C."/>
            <person name="Rocha E."/>
            <person name="Roche B."/>
            <person name="Rose M."/>
            <person name="Sadaie Y."/>
            <person name="Sato T."/>
            <person name="Scanlan E."/>
            <person name="Schleich S."/>
            <person name="Schroeter R."/>
            <person name="Scoffone F."/>
            <person name="Sekiguchi J."/>
            <person name="Sekowska A."/>
            <person name="Seror S.J."/>
            <person name="Serror P."/>
            <person name="Shin B.-S."/>
            <person name="Soldo B."/>
            <person name="Sorokin A."/>
            <person name="Tacconi E."/>
            <person name="Takagi T."/>
            <person name="Takahashi H."/>
            <person name="Takemaru K."/>
            <person name="Takeuchi M."/>
            <person name="Tamakoshi A."/>
            <person name="Tanaka T."/>
            <person name="Terpstra P."/>
            <person name="Tognoni A."/>
            <person name="Tosato V."/>
            <person name="Uchiyama S."/>
            <person name="Vandenbol M."/>
            <person name="Vannier F."/>
            <person name="Vassarotti A."/>
            <person name="Viari A."/>
            <person name="Wambutt R."/>
            <person name="Wedler E."/>
            <person name="Wedler H."/>
            <person name="Weitzenegger T."/>
            <person name="Winters P."/>
            <person name="Wipat A."/>
            <person name="Yamamoto H."/>
            <person name="Yamane K."/>
            <person name="Yasumoto K."/>
            <person name="Yata K."/>
            <person name="Yoshida K."/>
            <person name="Yoshikawa H.-F."/>
            <person name="Zumstein E."/>
            <person name="Yoshikawa H."/>
            <person name="Danchin A."/>
        </authorList>
    </citation>
    <scope>NUCLEOTIDE SEQUENCE [LARGE SCALE GENOMIC DNA]</scope>
    <source>
        <strain>168</strain>
    </source>
</reference>
<reference key="3">
    <citation type="journal article" date="2004" name="J. Bacteriol.">
        <title>Cardiolipin domains in Bacillus subtilis marburg membranes.</title>
        <authorList>
            <person name="Kawai F."/>
            <person name="Shoda M."/>
            <person name="Harashima R."/>
            <person name="Sadaie Y."/>
            <person name="Hara H."/>
            <person name="Matsumoto K."/>
        </authorList>
    </citation>
    <scope>FUNCTION IN THE CARDIOLIPIN BIOSYNTHESIS</scope>
    <scope>DISRUPTION PHENOTYPE</scope>
    <scope>NOMENCLATURE</scope>
</reference>
<proteinExistence type="evidence at protein level"/>
<sequence>MKVFIVIMIIVVIFFALILLDIFMGRAGYRKKAYEPVFSKKKSDIELIHCGADLVERMMNDIRQAASSVHMMFFIMKNDEVSHNMYTLLKTKAQAGVSVYLLLDWAGCRAIKKTALQTMKNAGVHVHVMNRPRFPFFFFHMQKRNHRKITVIDGKIGYIGGFNIAEEYLGKKAKFGNWEDYHLRMIGEGVHDLQTLFASDLKRNTGIELGSDVWPKLQQGTISHKIYATDGYSLENIYLANIAQAKNRLTVCTPYYIPSKPLQEALINARKNGVSVRIIVPMKSDHPLVREAAFTYYSELLDAGCLIYRYYQGFYHVKALIIDDHLSIIGTANFDKRSLFLNEEVNVEIDDEAFTSEVYATIEEDMKKSELLTMEDFSKRTFRQRPAEWLGRALSYFL</sequence>